<comment type="function">
    <text evidence="1">Catalyzes the oxidation of 5,10-methylenetetrahydrofolate to 5,10-methenyltetrahydrofolate and then the hydrolysis of 5,10-methenyltetrahydrofolate to 10-formyltetrahydrofolate.</text>
</comment>
<comment type="catalytic activity">
    <reaction evidence="1">
        <text>(6R)-5,10-methylene-5,6,7,8-tetrahydrofolate + NADP(+) = (6R)-5,10-methenyltetrahydrofolate + NADPH</text>
        <dbReference type="Rhea" id="RHEA:22812"/>
        <dbReference type="ChEBI" id="CHEBI:15636"/>
        <dbReference type="ChEBI" id="CHEBI:57455"/>
        <dbReference type="ChEBI" id="CHEBI:57783"/>
        <dbReference type="ChEBI" id="CHEBI:58349"/>
        <dbReference type="EC" id="1.5.1.5"/>
    </reaction>
</comment>
<comment type="catalytic activity">
    <reaction evidence="1">
        <text>(6R)-5,10-methenyltetrahydrofolate + H2O = (6R)-10-formyltetrahydrofolate + H(+)</text>
        <dbReference type="Rhea" id="RHEA:23700"/>
        <dbReference type="ChEBI" id="CHEBI:15377"/>
        <dbReference type="ChEBI" id="CHEBI:15378"/>
        <dbReference type="ChEBI" id="CHEBI:57455"/>
        <dbReference type="ChEBI" id="CHEBI:195366"/>
        <dbReference type="EC" id="3.5.4.9"/>
    </reaction>
</comment>
<comment type="pathway">
    <text evidence="1">One-carbon metabolism; tetrahydrofolate interconversion.</text>
</comment>
<comment type="subunit">
    <text evidence="1">Homodimer.</text>
</comment>
<comment type="similarity">
    <text evidence="1">Belongs to the tetrahydrofolate dehydrogenase/cyclohydrolase family.</text>
</comment>
<organism>
    <name type="scientific">Exiguobacterium sibiricum (strain DSM 17290 / CCUG 55495 / CIP 109462 / JCM 13490 / 255-15)</name>
    <dbReference type="NCBI Taxonomy" id="262543"/>
    <lineage>
        <taxon>Bacteria</taxon>
        <taxon>Bacillati</taxon>
        <taxon>Bacillota</taxon>
        <taxon>Bacilli</taxon>
        <taxon>Bacillales</taxon>
        <taxon>Bacillales Family XII. Incertae Sedis</taxon>
        <taxon>Exiguobacterium</taxon>
    </lineage>
</organism>
<keyword id="KW-0028">Amino-acid biosynthesis</keyword>
<keyword id="KW-0368">Histidine biosynthesis</keyword>
<keyword id="KW-0378">Hydrolase</keyword>
<keyword id="KW-0486">Methionine biosynthesis</keyword>
<keyword id="KW-0511">Multifunctional enzyme</keyword>
<keyword id="KW-0521">NADP</keyword>
<keyword id="KW-0554">One-carbon metabolism</keyword>
<keyword id="KW-0560">Oxidoreductase</keyword>
<keyword id="KW-0658">Purine biosynthesis</keyword>
<keyword id="KW-1185">Reference proteome</keyword>
<feature type="chain" id="PRO_1000196780" description="Bifunctional protein FolD">
    <location>
        <begin position="1"/>
        <end position="277"/>
    </location>
</feature>
<feature type="binding site" evidence="1">
    <location>
        <begin position="164"/>
        <end position="166"/>
    </location>
    <ligand>
        <name>NADP(+)</name>
        <dbReference type="ChEBI" id="CHEBI:58349"/>
    </ligand>
</feature>
<feature type="binding site" evidence="1">
    <location>
        <position position="189"/>
    </location>
    <ligand>
        <name>NADP(+)</name>
        <dbReference type="ChEBI" id="CHEBI:58349"/>
    </ligand>
</feature>
<feature type="binding site" evidence="1">
    <location>
        <position position="230"/>
    </location>
    <ligand>
        <name>NADP(+)</name>
        <dbReference type="ChEBI" id="CHEBI:58349"/>
    </ligand>
</feature>
<gene>
    <name evidence="1" type="primary">folD</name>
    <name type="ordered locus">Exig_0904</name>
</gene>
<protein>
    <recommendedName>
        <fullName evidence="1">Bifunctional protein FolD</fullName>
    </recommendedName>
    <domain>
        <recommendedName>
            <fullName evidence="1">Methylenetetrahydrofolate dehydrogenase</fullName>
            <ecNumber evidence="1">1.5.1.5</ecNumber>
        </recommendedName>
    </domain>
    <domain>
        <recommendedName>
            <fullName evidence="1">Methenyltetrahydrofolate cyclohydrolase</fullName>
            <ecNumber evidence="1">3.5.4.9</ecNumber>
        </recommendedName>
    </domain>
</protein>
<dbReference type="EC" id="1.5.1.5" evidence="1"/>
<dbReference type="EC" id="3.5.4.9" evidence="1"/>
<dbReference type="EMBL" id="CP001022">
    <property type="protein sequence ID" value="ACB60384.1"/>
    <property type="molecule type" value="Genomic_DNA"/>
</dbReference>
<dbReference type="SMR" id="B1YLQ1"/>
<dbReference type="STRING" id="262543.Exig_0904"/>
<dbReference type="KEGG" id="esi:Exig_0904"/>
<dbReference type="eggNOG" id="COG0190">
    <property type="taxonomic scope" value="Bacteria"/>
</dbReference>
<dbReference type="HOGENOM" id="CLU_034045_2_1_9"/>
<dbReference type="OrthoDB" id="9803580at2"/>
<dbReference type="UniPathway" id="UPA00193"/>
<dbReference type="Proteomes" id="UP000001681">
    <property type="component" value="Chromosome"/>
</dbReference>
<dbReference type="GO" id="GO:0005829">
    <property type="term" value="C:cytosol"/>
    <property type="evidence" value="ECO:0007669"/>
    <property type="project" value="TreeGrafter"/>
</dbReference>
<dbReference type="GO" id="GO:0004477">
    <property type="term" value="F:methenyltetrahydrofolate cyclohydrolase activity"/>
    <property type="evidence" value="ECO:0007669"/>
    <property type="project" value="UniProtKB-UniRule"/>
</dbReference>
<dbReference type="GO" id="GO:0004488">
    <property type="term" value="F:methylenetetrahydrofolate dehydrogenase (NADP+) activity"/>
    <property type="evidence" value="ECO:0007669"/>
    <property type="project" value="UniProtKB-UniRule"/>
</dbReference>
<dbReference type="GO" id="GO:0000105">
    <property type="term" value="P:L-histidine biosynthetic process"/>
    <property type="evidence" value="ECO:0007669"/>
    <property type="project" value="UniProtKB-KW"/>
</dbReference>
<dbReference type="GO" id="GO:0009086">
    <property type="term" value="P:methionine biosynthetic process"/>
    <property type="evidence" value="ECO:0007669"/>
    <property type="project" value="UniProtKB-KW"/>
</dbReference>
<dbReference type="GO" id="GO:0006164">
    <property type="term" value="P:purine nucleotide biosynthetic process"/>
    <property type="evidence" value="ECO:0007669"/>
    <property type="project" value="UniProtKB-KW"/>
</dbReference>
<dbReference type="GO" id="GO:0035999">
    <property type="term" value="P:tetrahydrofolate interconversion"/>
    <property type="evidence" value="ECO:0007669"/>
    <property type="project" value="UniProtKB-UniRule"/>
</dbReference>
<dbReference type="CDD" id="cd01080">
    <property type="entry name" value="NAD_bind_m-THF_DH_Cyclohyd"/>
    <property type="match status" value="1"/>
</dbReference>
<dbReference type="FunFam" id="3.40.50.10860:FF:000001">
    <property type="entry name" value="Bifunctional protein FolD"/>
    <property type="match status" value="1"/>
</dbReference>
<dbReference type="FunFam" id="3.40.50.720:FF:000094">
    <property type="entry name" value="Bifunctional protein FolD"/>
    <property type="match status" value="1"/>
</dbReference>
<dbReference type="Gene3D" id="3.40.50.10860">
    <property type="entry name" value="Leucine Dehydrogenase, chain A, domain 1"/>
    <property type="match status" value="1"/>
</dbReference>
<dbReference type="Gene3D" id="3.40.50.720">
    <property type="entry name" value="NAD(P)-binding Rossmann-like Domain"/>
    <property type="match status" value="1"/>
</dbReference>
<dbReference type="HAMAP" id="MF_01576">
    <property type="entry name" value="THF_DHG_CYH"/>
    <property type="match status" value="1"/>
</dbReference>
<dbReference type="InterPro" id="IPR046346">
    <property type="entry name" value="Aminoacid_DH-like_N_sf"/>
</dbReference>
<dbReference type="InterPro" id="IPR036291">
    <property type="entry name" value="NAD(P)-bd_dom_sf"/>
</dbReference>
<dbReference type="InterPro" id="IPR000672">
    <property type="entry name" value="THF_DH/CycHdrlase"/>
</dbReference>
<dbReference type="InterPro" id="IPR020630">
    <property type="entry name" value="THF_DH/CycHdrlase_cat_dom"/>
</dbReference>
<dbReference type="InterPro" id="IPR020867">
    <property type="entry name" value="THF_DH/CycHdrlase_CS"/>
</dbReference>
<dbReference type="InterPro" id="IPR020631">
    <property type="entry name" value="THF_DH/CycHdrlase_NAD-bd_dom"/>
</dbReference>
<dbReference type="NCBIfam" id="NF008058">
    <property type="entry name" value="PRK10792.1"/>
    <property type="match status" value="1"/>
</dbReference>
<dbReference type="NCBIfam" id="NF010783">
    <property type="entry name" value="PRK14186.1"/>
    <property type="match status" value="1"/>
</dbReference>
<dbReference type="PANTHER" id="PTHR48099:SF5">
    <property type="entry name" value="C-1-TETRAHYDROFOLATE SYNTHASE, CYTOPLASMIC"/>
    <property type="match status" value="1"/>
</dbReference>
<dbReference type="PANTHER" id="PTHR48099">
    <property type="entry name" value="C-1-TETRAHYDROFOLATE SYNTHASE, CYTOPLASMIC-RELATED"/>
    <property type="match status" value="1"/>
</dbReference>
<dbReference type="Pfam" id="PF00763">
    <property type="entry name" value="THF_DHG_CYH"/>
    <property type="match status" value="1"/>
</dbReference>
<dbReference type="Pfam" id="PF02882">
    <property type="entry name" value="THF_DHG_CYH_C"/>
    <property type="match status" value="1"/>
</dbReference>
<dbReference type="PRINTS" id="PR00085">
    <property type="entry name" value="THFDHDRGNASE"/>
</dbReference>
<dbReference type="SUPFAM" id="SSF53223">
    <property type="entry name" value="Aminoacid dehydrogenase-like, N-terminal domain"/>
    <property type="match status" value="1"/>
</dbReference>
<dbReference type="SUPFAM" id="SSF51735">
    <property type="entry name" value="NAD(P)-binding Rossmann-fold domains"/>
    <property type="match status" value="1"/>
</dbReference>
<dbReference type="PROSITE" id="PS00766">
    <property type="entry name" value="THF_DHG_CYH_1"/>
    <property type="match status" value="1"/>
</dbReference>
<dbReference type="PROSITE" id="PS00767">
    <property type="entry name" value="THF_DHG_CYH_2"/>
    <property type="match status" value="1"/>
</dbReference>
<proteinExistence type="inferred from homology"/>
<evidence type="ECO:0000255" key="1">
    <source>
        <dbReference type="HAMAP-Rule" id="MF_01576"/>
    </source>
</evidence>
<accession>B1YLQ1</accession>
<sequence length="277" mass="29936">MAVVIDGKQVAQSYRLKLKEEVARLKEERIQPKLTVILIGEDPASQSYVRGKEKAAQEIGMDSDLIRLPEETKESELLHLIERLNADASVHGILVQLPLPKHIDESKVIFAIAPEKDVDGFHPVSVGKMMIGEPTFLPCTPNGILHLVKEMNVPIAGRHVVVVGRSQIVGKPVGMLFLNESATVTYCHSKTADLGAMTRQADILIVAVGVPKLITADMVKPEAVVIDVGVNRVDGKLVGDVEFEAVKEVASMITPVPGGVGPMTITMLLHNTIEAAK</sequence>
<name>FOLD_EXIS2</name>
<reference key="1">
    <citation type="submission" date="2008-04" db="EMBL/GenBank/DDBJ databases">
        <title>Complete sequence of chromosome of Exiguobacterium sibiricum 255-15.</title>
        <authorList>
            <consortium name="US DOE Joint Genome Institute"/>
            <person name="Copeland A."/>
            <person name="Lucas S."/>
            <person name="Lapidus A."/>
            <person name="Glavina del Rio T."/>
            <person name="Dalin E."/>
            <person name="Tice H."/>
            <person name="Bruce D."/>
            <person name="Goodwin L."/>
            <person name="Pitluck S."/>
            <person name="Kiss H."/>
            <person name="Chertkov O."/>
            <person name="Monk C."/>
            <person name="Brettin T."/>
            <person name="Detter J.C."/>
            <person name="Han C."/>
            <person name="Kuske C.R."/>
            <person name="Schmutz J."/>
            <person name="Larimer F."/>
            <person name="Land M."/>
            <person name="Hauser L."/>
            <person name="Kyrpides N."/>
            <person name="Mikhailova N."/>
            <person name="Vishnivetskaya T."/>
            <person name="Rodrigues D.F."/>
            <person name="Gilichinsky D."/>
            <person name="Tiedje J."/>
            <person name="Richardson P."/>
        </authorList>
    </citation>
    <scope>NUCLEOTIDE SEQUENCE [LARGE SCALE GENOMIC DNA]</scope>
    <source>
        <strain>DSM 17290 / CCUG 55495 / CIP 109462 / JCM 13490 / 255-15</strain>
    </source>
</reference>